<sequence>MNESTINTVLFDLDGTLINTNELIIASFQHTLDHYYPGQYSREEILHFIGPSLFDTFSAMDPDLTDDMIQMYRTFNHEQHDLLVTEYETVLDTLKVLQDRGFKLGIVTTKIRDTVLMGLKLTGLEPFFEVIVTLDDVQNEKPHPEPVQLALSKLGSDPHEAVMVGDNYHDILSGQAAGTKTAGVAWSIKGEEALFKHRPDFMLKKMSDLLAIVGAD</sequence>
<keyword id="KW-0378">Hydrolase</keyword>
<keyword id="KW-0460">Magnesium</keyword>
<protein>
    <recommendedName>
        <fullName evidence="1">Pyrophosphatase PpaX</fullName>
        <ecNumber evidence="1">3.6.1.1</ecNumber>
    </recommendedName>
</protein>
<organism>
    <name type="scientific">Bacillus pumilus (strain SAFR-032)</name>
    <dbReference type="NCBI Taxonomy" id="315750"/>
    <lineage>
        <taxon>Bacteria</taxon>
        <taxon>Bacillati</taxon>
        <taxon>Bacillota</taxon>
        <taxon>Bacilli</taxon>
        <taxon>Bacillales</taxon>
        <taxon>Bacillaceae</taxon>
        <taxon>Bacillus</taxon>
    </lineage>
</organism>
<feature type="chain" id="PRO_1000067189" description="Pyrophosphatase PpaX">
    <location>
        <begin position="1"/>
        <end position="216"/>
    </location>
</feature>
<feature type="active site" description="Nucleophile" evidence="1">
    <location>
        <position position="12"/>
    </location>
</feature>
<reference key="1">
    <citation type="journal article" date="2007" name="PLoS ONE">
        <title>Paradoxical DNA repair and peroxide resistance gene conservation in Bacillus pumilus SAFR-032.</title>
        <authorList>
            <person name="Gioia J."/>
            <person name="Yerrapragada S."/>
            <person name="Qin X."/>
            <person name="Jiang H."/>
            <person name="Igboeli O.C."/>
            <person name="Muzny D."/>
            <person name="Dugan-Rocha S."/>
            <person name="Ding Y."/>
            <person name="Hawes A."/>
            <person name="Liu W."/>
            <person name="Perez L."/>
            <person name="Kovar C."/>
            <person name="Dinh H."/>
            <person name="Lee S."/>
            <person name="Nazareth L."/>
            <person name="Blyth P."/>
            <person name="Holder M."/>
            <person name="Buhay C."/>
            <person name="Tirumalai M.R."/>
            <person name="Liu Y."/>
            <person name="Dasgupta I."/>
            <person name="Bokhetache L."/>
            <person name="Fujita M."/>
            <person name="Karouia F."/>
            <person name="Eswara Moorthy P."/>
            <person name="Siefert J."/>
            <person name="Uzman A."/>
            <person name="Buzumbo P."/>
            <person name="Verma A."/>
            <person name="Zwiya H."/>
            <person name="McWilliams B.D."/>
            <person name="Olowu A."/>
            <person name="Clinkenbeard K.D."/>
            <person name="Newcombe D."/>
            <person name="Golebiewski L."/>
            <person name="Petrosino J.F."/>
            <person name="Nicholson W.L."/>
            <person name="Fox G.E."/>
            <person name="Venkateswaran K."/>
            <person name="Highlander S.K."/>
            <person name="Weinstock G.M."/>
        </authorList>
    </citation>
    <scope>NUCLEOTIDE SEQUENCE [LARGE SCALE GENOMIC DNA]</scope>
    <source>
        <strain>SAFR-032</strain>
    </source>
</reference>
<dbReference type="EC" id="3.6.1.1" evidence="1"/>
<dbReference type="EMBL" id="CP000813">
    <property type="protein sequence ID" value="ABV63788.1"/>
    <property type="molecule type" value="Genomic_DNA"/>
</dbReference>
<dbReference type="RefSeq" id="WP_012011377.1">
    <property type="nucleotide sequence ID" value="NZ_VEIS01000009.1"/>
</dbReference>
<dbReference type="SMR" id="A8FHS1"/>
<dbReference type="STRING" id="315750.BPUM_3134"/>
<dbReference type="GeneID" id="5622425"/>
<dbReference type="KEGG" id="bpu:BPUM_3134"/>
<dbReference type="eggNOG" id="COG0546">
    <property type="taxonomic scope" value="Bacteria"/>
</dbReference>
<dbReference type="HOGENOM" id="CLU_045011_19_3_9"/>
<dbReference type="OrthoDB" id="9807630at2"/>
<dbReference type="Proteomes" id="UP000001355">
    <property type="component" value="Chromosome"/>
</dbReference>
<dbReference type="GO" id="GO:0005829">
    <property type="term" value="C:cytosol"/>
    <property type="evidence" value="ECO:0007669"/>
    <property type="project" value="TreeGrafter"/>
</dbReference>
<dbReference type="GO" id="GO:0004427">
    <property type="term" value="F:inorganic diphosphate phosphatase activity"/>
    <property type="evidence" value="ECO:0007669"/>
    <property type="project" value="UniProtKB-UniRule"/>
</dbReference>
<dbReference type="GO" id="GO:0000287">
    <property type="term" value="F:magnesium ion binding"/>
    <property type="evidence" value="ECO:0007669"/>
    <property type="project" value="UniProtKB-UniRule"/>
</dbReference>
<dbReference type="GO" id="GO:0008967">
    <property type="term" value="F:phosphoglycolate phosphatase activity"/>
    <property type="evidence" value="ECO:0007669"/>
    <property type="project" value="TreeGrafter"/>
</dbReference>
<dbReference type="GO" id="GO:0006281">
    <property type="term" value="P:DNA repair"/>
    <property type="evidence" value="ECO:0007669"/>
    <property type="project" value="TreeGrafter"/>
</dbReference>
<dbReference type="CDD" id="cd02616">
    <property type="entry name" value="HAD_PPase"/>
    <property type="match status" value="1"/>
</dbReference>
<dbReference type="FunFam" id="3.40.50.1000:FF:000022">
    <property type="entry name" value="Phosphoglycolate phosphatase"/>
    <property type="match status" value="1"/>
</dbReference>
<dbReference type="Gene3D" id="3.40.50.1000">
    <property type="entry name" value="HAD superfamily/HAD-like"/>
    <property type="match status" value="1"/>
</dbReference>
<dbReference type="Gene3D" id="1.10.150.240">
    <property type="entry name" value="Putative phosphatase, domain 2"/>
    <property type="match status" value="1"/>
</dbReference>
<dbReference type="HAMAP" id="MF_01250">
    <property type="entry name" value="Pyrophosphat_PpaX"/>
    <property type="match status" value="1"/>
</dbReference>
<dbReference type="InterPro" id="IPR050155">
    <property type="entry name" value="HAD-like_hydrolase_sf"/>
</dbReference>
<dbReference type="InterPro" id="IPR036412">
    <property type="entry name" value="HAD-like_sf"/>
</dbReference>
<dbReference type="InterPro" id="IPR006439">
    <property type="entry name" value="HAD-SF_hydro_IA"/>
</dbReference>
<dbReference type="InterPro" id="IPR041492">
    <property type="entry name" value="HAD_2"/>
</dbReference>
<dbReference type="InterPro" id="IPR023214">
    <property type="entry name" value="HAD_sf"/>
</dbReference>
<dbReference type="InterPro" id="IPR023198">
    <property type="entry name" value="PGP-like_dom2"/>
</dbReference>
<dbReference type="InterPro" id="IPR023733">
    <property type="entry name" value="Pyrophosphatase_Ppax"/>
</dbReference>
<dbReference type="NCBIfam" id="TIGR01549">
    <property type="entry name" value="HAD-SF-IA-v1"/>
    <property type="match status" value="1"/>
</dbReference>
<dbReference type="NCBIfam" id="TIGR01509">
    <property type="entry name" value="HAD-SF-IA-v3"/>
    <property type="match status" value="1"/>
</dbReference>
<dbReference type="NCBIfam" id="NF009804">
    <property type="entry name" value="PRK13288.1"/>
    <property type="match status" value="1"/>
</dbReference>
<dbReference type="PANTHER" id="PTHR43434">
    <property type="entry name" value="PHOSPHOGLYCOLATE PHOSPHATASE"/>
    <property type="match status" value="1"/>
</dbReference>
<dbReference type="PANTHER" id="PTHR43434:SF26">
    <property type="entry name" value="PYROPHOSPHATASE PPAX"/>
    <property type="match status" value="1"/>
</dbReference>
<dbReference type="Pfam" id="PF13419">
    <property type="entry name" value="HAD_2"/>
    <property type="match status" value="1"/>
</dbReference>
<dbReference type="SFLD" id="SFLDG01135">
    <property type="entry name" value="C1.5.6:_HAD__Beta-PGM__Phospha"/>
    <property type="match status" value="1"/>
</dbReference>
<dbReference type="SFLD" id="SFLDG01129">
    <property type="entry name" value="C1.5:_HAD__Beta-PGM__Phosphata"/>
    <property type="match status" value="1"/>
</dbReference>
<dbReference type="SUPFAM" id="SSF56784">
    <property type="entry name" value="HAD-like"/>
    <property type="match status" value="1"/>
</dbReference>
<name>PPAX_BACP2</name>
<gene>
    <name evidence="1" type="primary">ppaX</name>
    <name type="ordered locus">BPUM_3134</name>
</gene>
<comment type="function">
    <text evidence="1">Hydrolyzes pyrophosphate formed during P-Ser-HPr dephosphorylation by HPrK/P. Might play a role in controlling the intracellular pyrophosphate pool.</text>
</comment>
<comment type="catalytic activity">
    <reaction evidence="1">
        <text>diphosphate + H2O = 2 phosphate + H(+)</text>
        <dbReference type="Rhea" id="RHEA:24576"/>
        <dbReference type="ChEBI" id="CHEBI:15377"/>
        <dbReference type="ChEBI" id="CHEBI:15378"/>
        <dbReference type="ChEBI" id="CHEBI:33019"/>
        <dbReference type="ChEBI" id="CHEBI:43474"/>
        <dbReference type="EC" id="3.6.1.1"/>
    </reaction>
</comment>
<comment type="cofactor">
    <cofactor evidence="1">
        <name>Mg(2+)</name>
        <dbReference type="ChEBI" id="CHEBI:18420"/>
    </cofactor>
</comment>
<comment type="similarity">
    <text evidence="1">Belongs to the HAD-like hydrolase superfamily. PpaX family.</text>
</comment>
<evidence type="ECO:0000255" key="1">
    <source>
        <dbReference type="HAMAP-Rule" id="MF_01250"/>
    </source>
</evidence>
<proteinExistence type="inferred from homology"/>
<accession>A8FHS1</accession>